<keyword id="KW-0175">Coiled coil</keyword>
<keyword id="KW-0963">Cytoplasm</keyword>
<keyword id="KW-0509">mRNA transport</keyword>
<keyword id="KW-0906">Nuclear pore complex</keyword>
<keyword id="KW-0539">Nucleus</keyword>
<keyword id="KW-0597">Phosphoprotein</keyword>
<keyword id="KW-0653">Protein transport</keyword>
<keyword id="KW-1185">Reference proteome</keyword>
<keyword id="KW-0811">Translocation</keyword>
<keyword id="KW-0813">Transport</keyword>
<name>GLE1_RAT</name>
<proteinExistence type="evidence at transcript level"/>
<sequence length="698" mass="79492">MPSDGRCWETLRALRNSSKGRLRYDREWLLRYEDVLEECMSLPKLSSYSGWVVDHILPNTSHHTQENAPSSDNSPSSGSASGLYQSTLKSPVRSSPQSPSPSTPSGTQSAHESPFTEPIALQSSRAIKVEGCIRMYELAHRMRGTEGLRQWQEEQERKVQALSEMASEQLKRFDELKELKLHKEFRDLQEVMEKSTREALGHQEKLKAEHRHRAKILNLKLREAEQQRVKQAEQEQLRKEEGQIRLRSLYTLQEEVLQLNQQLDASSQHKDLLNVDLAAFQTRGNQLCGLISGIIRTTLESGYPTAENQAEAERVLQEMRDLLSNLEQEITRASEMKKKDEEEARVKLQESQVQQGPGAPTKTSAPSPSLVGTQSEDLQVKVQDSTMQWYQQLQDASAKCVLAFEDLTSSKDSQIKKIKMDLQKAATIPVSQISTIAGSKLKEVFDKIHSLLSGKPVQSGGRSVCVTLNPQGLDFVQYKLAEKFVKQGEEEVASHHEAAFPIAVVASGIWMLHPKVGDLILAHLHKKCPYSVPFYPAFKEGMPLEDYQRMLGYQVTDSKVEQQDNFLKRMSGMIRLYAAIIQLQWPYGSRQEAHPHGLNHGWRWLAQILNMEPLSDVTATLLFDFLEVCGNALMKQYQVQFWKMILLIKEDYFPRIEAITSSGQMGSFIRLKQFLEKCLQRREIPVPKGFLTPSFWRS</sequence>
<protein>
    <recommendedName>
        <fullName evidence="6">mRNA export factor GLE1</fullName>
    </recommendedName>
    <alternativeName>
        <fullName evidence="7">GLE1 RNA export mediator</fullName>
    </alternativeName>
    <alternativeName>
        <fullName evidence="6">GLE1-like protein</fullName>
    </alternativeName>
    <alternativeName>
        <fullName evidence="6">Nucleoporin GLE1</fullName>
    </alternativeName>
</protein>
<comment type="function">
    <text evidence="1">Required for the export of mRNAs containing poly(A) tails from the nucleus into the cytoplasm. May be involved in the terminal step of the mRNA transport through the nuclear pore complex (NPC) (By similarity).</text>
</comment>
<comment type="subunit">
    <text evidence="1">Associated with the NPC, however it may not be a stable component of the NPC complex since it shuttles between the nucleus and the cytoplasm. Interacts with nuclear pore complex proteins NUP155 and NUPL2 (By similarity).</text>
</comment>
<comment type="subcellular location">
    <subcellularLocation>
        <location evidence="2">Nucleus</location>
    </subcellularLocation>
    <subcellularLocation>
        <location evidence="2">Cytoplasm</location>
    </subcellularLocation>
    <subcellularLocation>
        <location evidence="2">Nucleus</location>
        <location evidence="2">Nuclear pore complex</location>
    </subcellularLocation>
    <text evidence="2">Shuttles between the nucleus and the cytoplasm. Shuttling is essential for its mRNA export function.</text>
</comment>
<comment type="similarity">
    <text evidence="6">Belongs to the GLE1 family.</text>
</comment>
<feature type="chain" id="PRO_0000204825" description="mRNA export factor GLE1">
    <location>
        <begin position="1"/>
        <end position="698"/>
    </location>
</feature>
<feature type="region of interest" description="Interaction with NUP155" evidence="1">
    <location>
        <begin position="1"/>
        <end position="29"/>
    </location>
</feature>
<feature type="region of interest" description="Disordered" evidence="5">
    <location>
        <begin position="62"/>
        <end position="119"/>
    </location>
</feature>
<feature type="region of interest" description="Disordered" evidence="5">
    <location>
        <begin position="333"/>
        <end position="374"/>
    </location>
</feature>
<feature type="region of interest" description="Mediates the shuttling between the nucleus and the cytoplasm" evidence="1">
    <location>
        <begin position="444"/>
        <end position="483"/>
    </location>
</feature>
<feature type="region of interest" description="Interaction with NUPL2" evidence="1">
    <location>
        <begin position="656"/>
        <end position="698"/>
    </location>
</feature>
<feature type="coiled-coil region" evidence="4">
    <location>
        <begin position="152"/>
        <end position="274"/>
    </location>
</feature>
<feature type="coiled-coil region" evidence="4">
    <location>
        <begin position="305"/>
        <end position="355"/>
    </location>
</feature>
<feature type="compositionally biased region" description="Low complexity" evidence="5">
    <location>
        <begin position="67"/>
        <end position="82"/>
    </location>
</feature>
<feature type="compositionally biased region" description="Basic and acidic residues" evidence="5">
    <location>
        <begin position="333"/>
        <end position="348"/>
    </location>
</feature>
<feature type="compositionally biased region" description="Polar residues" evidence="5">
    <location>
        <begin position="349"/>
        <end position="374"/>
    </location>
</feature>
<feature type="modified residue" description="Phosphoserine" evidence="2">
    <location>
        <position position="41"/>
    </location>
</feature>
<feature type="modified residue" description="Phosphoserine" evidence="2">
    <location>
        <position position="90"/>
    </location>
</feature>
<feature type="modified residue" description="Phosphoserine" evidence="2">
    <location>
        <position position="100"/>
    </location>
</feature>
<feature type="modified residue" description="Phosphoserine" evidence="3">
    <location>
        <position position="351"/>
    </location>
</feature>
<organism>
    <name type="scientific">Rattus norvegicus</name>
    <name type="common">Rat</name>
    <dbReference type="NCBI Taxonomy" id="10116"/>
    <lineage>
        <taxon>Eukaryota</taxon>
        <taxon>Metazoa</taxon>
        <taxon>Chordata</taxon>
        <taxon>Craniata</taxon>
        <taxon>Vertebrata</taxon>
        <taxon>Euteleostomi</taxon>
        <taxon>Mammalia</taxon>
        <taxon>Eutheria</taxon>
        <taxon>Euarchontoglires</taxon>
        <taxon>Glires</taxon>
        <taxon>Rodentia</taxon>
        <taxon>Myomorpha</taxon>
        <taxon>Muroidea</taxon>
        <taxon>Muridae</taxon>
        <taxon>Murinae</taxon>
        <taxon>Rattus</taxon>
    </lineage>
</organism>
<gene>
    <name type="primary">Gle1</name>
    <name type="synonym">Gle1l</name>
</gene>
<evidence type="ECO:0000250" key="1"/>
<evidence type="ECO:0000250" key="2">
    <source>
        <dbReference type="UniProtKB" id="Q53GS7"/>
    </source>
</evidence>
<evidence type="ECO:0000250" key="3">
    <source>
        <dbReference type="UniProtKB" id="Q8R322"/>
    </source>
</evidence>
<evidence type="ECO:0000255" key="4"/>
<evidence type="ECO:0000256" key="5">
    <source>
        <dbReference type="SAM" id="MobiDB-lite"/>
    </source>
</evidence>
<evidence type="ECO:0000305" key="6"/>
<evidence type="ECO:0000312" key="7">
    <source>
        <dbReference type="RGD" id="1307329"/>
    </source>
</evidence>
<accession>Q4KLN4</accession>
<dbReference type="EMBL" id="BC099088">
    <property type="protein sequence ID" value="AAH99088.1"/>
    <property type="molecule type" value="mRNA"/>
</dbReference>
<dbReference type="RefSeq" id="NP_001020902.1">
    <property type="nucleotide sequence ID" value="NM_001025731.1"/>
</dbReference>
<dbReference type="SMR" id="Q4KLN4"/>
<dbReference type="FunCoup" id="Q4KLN4">
    <property type="interactions" value="3432"/>
</dbReference>
<dbReference type="STRING" id="10116.ENSRNOP00000020630"/>
<dbReference type="GlyGen" id="Q4KLN4">
    <property type="glycosylation" value="1 site"/>
</dbReference>
<dbReference type="iPTMnet" id="Q4KLN4"/>
<dbReference type="PhosphoSitePlus" id="Q4KLN4"/>
<dbReference type="jPOST" id="Q4KLN4"/>
<dbReference type="PaxDb" id="10116-ENSRNOP00000020630"/>
<dbReference type="Ensembl" id="ENSRNOT00000099233.1">
    <property type="protein sequence ID" value="ENSRNOP00000092246.1"/>
    <property type="gene ID" value="ENSRNOG00000015237.8"/>
</dbReference>
<dbReference type="GeneID" id="362098"/>
<dbReference type="KEGG" id="rno:362098"/>
<dbReference type="UCSC" id="RGD:1307329">
    <property type="organism name" value="rat"/>
</dbReference>
<dbReference type="AGR" id="RGD:1307329"/>
<dbReference type="CTD" id="2733"/>
<dbReference type="RGD" id="1307329">
    <property type="gene designation" value="Gle1"/>
</dbReference>
<dbReference type="eggNOG" id="KOG2412">
    <property type="taxonomic scope" value="Eukaryota"/>
</dbReference>
<dbReference type="GeneTree" id="ENSGT00390000012903"/>
<dbReference type="HOGENOM" id="CLU_024662_1_0_1"/>
<dbReference type="InParanoid" id="Q4KLN4"/>
<dbReference type="OMA" id="AYMYKES"/>
<dbReference type="OrthoDB" id="420884at2759"/>
<dbReference type="PhylomeDB" id="Q4KLN4"/>
<dbReference type="TreeFam" id="TF324158"/>
<dbReference type="Reactome" id="R-RNO-159236">
    <property type="pathway name" value="Transport of Mature mRNA derived from an Intron-Containing Transcript"/>
</dbReference>
<dbReference type="PRO" id="PR:Q4KLN4"/>
<dbReference type="Proteomes" id="UP000002494">
    <property type="component" value="Chromosome 3"/>
</dbReference>
<dbReference type="Bgee" id="ENSRNOG00000015237">
    <property type="expression patterns" value="Expressed in spleen and 18 other cell types or tissues"/>
</dbReference>
<dbReference type="GO" id="GO:0005814">
    <property type="term" value="C:centriole"/>
    <property type="evidence" value="ECO:0000266"/>
    <property type="project" value="RGD"/>
</dbReference>
<dbReference type="GO" id="GO:0005813">
    <property type="term" value="C:centrosome"/>
    <property type="evidence" value="ECO:0000266"/>
    <property type="project" value="RGD"/>
</dbReference>
<dbReference type="GO" id="GO:0036064">
    <property type="term" value="C:ciliary basal body"/>
    <property type="evidence" value="ECO:0000266"/>
    <property type="project" value="RGD"/>
</dbReference>
<dbReference type="GO" id="GO:0005737">
    <property type="term" value="C:cytoplasm"/>
    <property type="evidence" value="ECO:0000318"/>
    <property type="project" value="GO_Central"/>
</dbReference>
<dbReference type="GO" id="GO:0005635">
    <property type="term" value="C:nuclear envelope"/>
    <property type="evidence" value="ECO:0000266"/>
    <property type="project" value="RGD"/>
</dbReference>
<dbReference type="GO" id="GO:0044614">
    <property type="term" value="C:nuclear pore cytoplasmic filaments"/>
    <property type="evidence" value="ECO:0000318"/>
    <property type="project" value="GO_Central"/>
</dbReference>
<dbReference type="GO" id="GO:0042802">
    <property type="term" value="F:identical protein binding"/>
    <property type="evidence" value="ECO:0000266"/>
    <property type="project" value="RGD"/>
</dbReference>
<dbReference type="GO" id="GO:0000822">
    <property type="term" value="F:inositol hexakisphosphate binding"/>
    <property type="evidence" value="ECO:0000318"/>
    <property type="project" value="GO_Central"/>
</dbReference>
<dbReference type="GO" id="GO:0005543">
    <property type="term" value="F:phospholipid binding"/>
    <property type="evidence" value="ECO:0000318"/>
    <property type="project" value="GO_Central"/>
</dbReference>
<dbReference type="GO" id="GO:0031369">
    <property type="term" value="F:translation initiation factor binding"/>
    <property type="evidence" value="ECO:0000318"/>
    <property type="project" value="GO_Central"/>
</dbReference>
<dbReference type="GO" id="GO:0016973">
    <property type="term" value="P:poly(A)+ mRNA export from nucleus"/>
    <property type="evidence" value="ECO:0000318"/>
    <property type="project" value="GO_Central"/>
</dbReference>
<dbReference type="GO" id="GO:0015031">
    <property type="term" value="P:protein transport"/>
    <property type="evidence" value="ECO:0007669"/>
    <property type="project" value="UniProtKB-KW"/>
</dbReference>
<dbReference type="FunFam" id="1.25.40.510:FF:000001">
    <property type="entry name" value="Nucleoporin GLE1 isoform 1"/>
    <property type="match status" value="1"/>
</dbReference>
<dbReference type="Gene3D" id="1.25.40.510">
    <property type="entry name" value="GLE1-like"/>
    <property type="match status" value="1"/>
</dbReference>
<dbReference type="InterPro" id="IPR012476">
    <property type="entry name" value="GLE1"/>
</dbReference>
<dbReference type="InterPro" id="IPR038506">
    <property type="entry name" value="GLE1-like_sf"/>
</dbReference>
<dbReference type="PANTHER" id="PTHR12960">
    <property type="entry name" value="GLE-1-RELATED"/>
    <property type="match status" value="1"/>
</dbReference>
<dbReference type="PANTHER" id="PTHR12960:SF0">
    <property type="entry name" value="MRNA EXPORT FACTOR GLE1"/>
    <property type="match status" value="1"/>
</dbReference>
<dbReference type="Pfam" id="PF07817">
    <property type="entry name" value="GLE1"/>
    <property type="match status" value="1"/>
</dbReference>
<reference key="1">
    <citation type="journal article" date="2004" name="Genome Res.">
        <title>The status, quality, and expansion of the NIH full-length cDNA project: the Mammalian Gene Collection (MGC).</title>
        <authorList>
            <consortium name="The MGC Project Team"/>
        </authorList>
    </citation>
    <scope>NUCLEOTIDE SEQUENCE [LARGE SCALE MRNA]</scope>
    <source>
        <tissue>Testis</tissue>
    </source>
</reference>